<gene>
    <name evidence="1" type="primary">alc</name>
    <name type="ordered locus">PSPA7_3820</name>
</gene>
<comment type="catalytic activity">
    <reaction evidence="1">
        <text>allantoate + H2O = (S)-ureidoglycolate + urea</text>
        <dbReference type="Rhea" id="RHEA:11016"/>
        <dbReference type="ChEBI" id="CHEBI:15377"/>
        <dbReference type="ChEBI" id="CHEBI:16199"/>
        <dbReference type="ChEBI" id="CHEBI:17536"/>
        <dbReference type="ChEBI" id="CHEBI:57296"/>
        <dbReference type="EC" id="3.5.3.4"/>
    </reaction>
</comment>
<comment type="pathway">
    <text evidence="1">Nitrogen metabolism; (S)-allantoin degradation; (S)-ureidoglycolate from allantoate (aminidohydrolase route): step 1/1.</text>
</comment>
<comment type="similarity">
    <text evidence="1">Belongs to the allantoicase family.</text>
</comment>
<name>ALLC_PSEP7</name>
<dbReference type="EC" id="3.5.3.4" evidence="1"/>
<dbReference type="EMBL" id="CP000744">
    <property type="protein sequence ID" value="ABR81235.1"/>
    <property type="molecule type" value="Genomic_DNA"/>
</dbReference>
<dbReference type="RefSeq" id="WP_012076372.1">
    <property type="nucleotide sequence ID" value="NC_009656.1"/>
</dbReference>
<dbReference type="SMR" id="A6V7Y9"/>
<dbReference type="KEGG" id="pap:PSPA7_3820"/>
<dbReference type="HOGENOM" id="CLU_038797_1_2_6"/>
<dbReference type="UniPathway" id="UPA00395">
    <property type="reaction ID" value="UER00654"/>
</dbReference>
<dbReference type="Proteomes" id="UP000001582">
    <property type="component" value="Chromosome"/>
</dbReference>
<dbReference type="GO" id="GO:0004037">
    <property type="term" value="F:allantoicase activity"/>
    <property type="evidence" value="ECO:0007669"/>
    <property type="project" value="UniProtKB-UniRule"/>
</dbReference>
<dbReference type="GO" id="GO:0000256">
    <property type="term" value="P:allantoin catabolic process"/>
    <property type="evidence" value="ECO:0007669"/>
    <property type="project" value="UniProtKB-UniRule"/>
</dbReference>
<dbReference type="GO" id="GO:0006144">
    <property type="term" value="P:purine nucleobase metabolic process"/>
    <property type="evidence" value="ECO:0007669"/>
    <property type="project" value="UniProtKB-KW"/>
</dbReference>
<dbReference type="FunFam" id="2.60.120.260:FF:000059">
    <property type="entry name" value="Probable allantoicase"/>
    <property type="match status" value="1"/>
</dbReference>
<dbReference type="FunFam" id="2.60.120.260:FF:000090">
    <property type="entry name" value="Probable allantoicase"/>
    <property type="match status" value="1"/>
</dbReference>
<dbReference type="Gene3D" id="2.60.120.260">
    <property type="entry name" value="Galactose-binding domain-like"/>
    <property type="match status" value="2"/>
</dbReference>
<dbReference type="HAMAP" id="MF_00813">
    <property type="entry name" value="Allantoicase"/>
    <property type="match status" value="1"/>
</dbReference>
<dbReference type="InterPro" id="IPR005164">
    <property type="entry name" value="Allantoicase"/>
</dbReference>
<dbReference type="InterPro" id="IPR015908">
    <property type="entry name" value="Allantoicase_dom"/>
</dbReference>
<dbReference type="InterPro" id="IPR008979">
    <property type="entry name" value="Galactose-bd-like_sf"/>
</dbReference>
<dbReference type="NCBIfam" id="TIGR02961">
    <property type="entry name" value="allantoicase"/>
    <property type="match status" value="1"/>
</dbReference>
<dbReference type="PANTHER" id="PTHR12045">
    <property type="entry name" value="ALLANTOICASE"/>
    <property type="match status" value="1"/>
</dbReference>
<dbReference type="PANTHER" id="PTHR12045:SF3">
    <property type="entry name" value="INACTIVE ALLANTOICASE-RELATED"/>
    <property type="match status" value="1"/>
</dbReference>
<dbReference type="Pfam" id="PF03561">
    <property type="entry name" value="Allantoicase"/>
    <property type="match status" value="2"/>
</dbReference>
<dbReference type="PIRSF" id="PIRSF016516">
    <property type="entry name" value="Allantoicase"/>
    <property type="match status" value="1"/>
</dbReference>
<dbReference type="SUPFAM" id="SSF49785">
    <property type="entry name" value="Galactose-binding domain-like"/>
    <property type="match status" value="2"/>
</dbReference>
<feature type="chain" id="PRO_1000062283" description="Probable allantoicase">
    <location>
        <begin position="1"/>
        <end position="332"/>
    </location>
</feature>
<accession>A6V7Y9</accession>
<sequence length="332" mass="36989">MNADHAPFRHYLDLADARLGSQVVAVSDEWFAPASRMLQAGEPVWKEGVFDDSGKWMDGWETRRKRFEGHDQAVIRLGVSGVLKGVDIDTRFFTGNHPPAASLDGCFCAEGDPDDGTSWSEVLPSVELQGDRHHYHAIDDERPWTHLRLNIYPDGGIARLRVYGVPYRDWRSQTPGTALDLAAAINGGRALACSDQHFGPMVNLLKPGRALNMGDGWETGRRRTPGHDWAIIALGHPGSIEAAVVDTLHFKGNYPESCSIQAAFVEDGNEARIEAQSLFWRELLPAQKLEMHHEHRFERQLNALGPVSHVRLNIFPDGGVSRLRLFGRPQLP</sequence>
<keyword id="KW-0378">Hydrolase</keyword>
<keyword id="KW-0659">Purine metabolism</keyword>
<evidence type="ECO:0000255" key="1">
    <source>
        <dbReference type="HAMAP-Rule" id="MF_00813"/>
    </source>
</evidence>
<reference key="1">
    <citation type="submission" date="2007-06" db="EMBL/GenBank/DDBJ databases">
        <authorList>
            <person name="Dodson R.J."/>
            <person name="Harkins D."/>
            <person name="Paulsen I.T."/>
        </authorList>
    </citation>
    <scope>NUCLEOTIDE SEQUENCE [LARGE SCALE GENOMIC DNA]</scope>
    <source>
        <strain>DSM 24068 / PA7</strain>
    </source>
</reference>
<proteinExistence type="inferred from homology"/>
<organism>
    <name type="scientific">Pseudomonas paraeruginosa (strain DSM 24068 / PA7)</name>
    <name type="common">Pseudomonas aeruginosa (strain PA7)</name>
    <dbReference type="NCBI Taxonomy" id="381754"/>
    <lineage>
        <taxon>Bacteria</taxon>
        <taxon>Pseudomonadati</taxon>
        <taxon>Pseudomonadota</taxon>
        <taxon>Gammaproteobacteria</taxon>
        <taxon>Pseudomonadales</taxon>
        <taxon>Pseudomonadaceae</taxon>
        <taxon>Pseudomonas</taxon>
        <taxon>Pseudomonas paraeruginosa</taxon>
    </lineage>
</organism>
<protein>
    <recommendedName>
        <fullName evidence="1">Probable allantoicase</fullName>
        <ecNumber evidence="1">3.5.3.4</ecNumber>
    </recommendedName>
    <alternativeName>
        <fullName evidence="1">Allantoate amidinohydrolase</fullName>
    </alternativeName>
</protein>